<comment type="function">
    <text evidence="1">Catalyzes the S-adenosylmethionine monomethyl esterification of trans-aconitate.</text>
</comment>
<comment type="catalytic activity">
    <reaction evidence="1">
        <text>trans-aconitate + S-adenosyl-L-methionine = (E)-3-(methoxycarbonyl)pent-2-enedioate + S-adenosyl-L-homocysteine</text>
        <dbReference type="Rhea" id="RHEA:14969"/>
        <dbReference type="ChEBI" id="CHEBI:15708"/>
        <dbReference type="ChEBI" id="CHEBI:57470"/>
        <dbReference type="ChEBI" id="CHEBI:57856"/>
        <dbReference type="ChEBI" id="CHEBI:59789"/>
        <dbReference type="EC" id="2.1.1.144"/>
    </reaction>
</comment>
<comment type="subcellular location">
    <subcellularLocation>
        <location evidence="1">Cytoplasm</location>
    </subcellularLocation>
</comment>
<comment type="similarity">
    <text evidence="1">Belongs to the methyltransferase superfamily. Tam family.</text>
</comment>
<sequence length="252" mass="28957">MSDWNPSLYLHFAAERSRPAVELLARVSLENIEYIADLGCGPGNSTALLHQRWPAARITGIDSSPAMIAEARSALPDCLFVEADIRNWQPEQALDLIFANASLQWLPDHYELFPHLVSLLSPLGVLAVQMPDNWLEPTHVLMREVAWEQNYPDRGREPLAGVHAYYDILSEAGCEVDIWRTTYYHQMPSHQAIIDWVTATGLRPWLQDLTESEQQHFLTRYHQMLEEQYPLQENGQILLAFPRLFIVARRTE</sequence>
<organism>
    <name type="scientific">Escherichia coli (strain UTI89 / UPEC)</name>
    <dbReference type="NCBI Taxonomy" id="364106"/>
    <lineage>
        <taxon>Bacteria</taxon>
        <taxon>Pseudomonadati</taxon>
        <taxon>Pseudomonadota</taxon>
        <taxon>Gammaproteobacteria</taxon>
        <taxon>Enterobacterales</taxon>
        <taxon>Enterobacteriaceae</taxon>
        <taxon>Escherichia</taxon>
    </lineage>
</organism>
<dbReference type="EC" id="2.1.1.144" evidence="1"/>
<dbReference type="EMBL" id="CP000243">
    <property type="protein sequence ID" value="ABE07216.1"/>
    <property type="molecule type" value="Genomic_DNA"/>
</dbReference>
<dbReference type="RefSeq" id="WP_001286588.1">
    <property type="nucleotide sequence ID" value="NZ_CP064825.1"/>
</dbReference>
<dbReference type="SMR" id="Q1RBP8"/>
<dbReference type="KEGG" id="eci:UTI89_C1738"/>
<dbReference type="HOGENOM" id="CLU_037990_5_2_6"/>
<dbReference type="Proteomes" id="UP000001952">
    <property type="component" value="Chromosome"/>
</dbReference>
<dbReference type="GO" id="GO:0005737">
    <property type="term" value="C:cytoplasm"/>
    <property type="evidence" value="ECO:0007669"/>
    <property type="project" value="UniProtKB-SubCell"/>
</dbReference>
<dbReference type="GO" id="GO:0030798">
    <property type="term" value="F:trans-aconitate 2-methyltransferase activity"/>
    <property type="evidence" value="ECO:0007669"/>
    <property type="project" value="UniProtKB-UniRule"/>
</dbReference>
<dbReference type="GO" id="GO:0032259">
    <property type="term" value="P:methylation"/>
    <property type="evidence" value="ECO:0007669"/>
    <property type="project" value="UniProtKB-KW"/>
</dbReference>
<dbReference type="CDD" id="cd02440">
    <property type="entry name" value="AdoMet_MTases"/>
    <property type="match status" value="1"/>
</dbReference>
<dbReference type="Gene3D" id="1.10.150.290">
    <property type="entry name" value="S-adenosyl-L-methionine-dependent methyltransferases"/>
    <property type="match status" value="1"/>
</dbReference>
<dbReference type="Gene3D" id="3.40.50.150">
    <property type="entry name" value="Vaccinia Virus protein VP39"/>
    <property type="match status" value="1"/>
</dbReference>
<dbReference type="HAMAP" id="MF_00560">
    <property type="entry name" value="Tran_acon_Me_trans"/>
    <property type="match status" value="1"/>
</dbReference>
<dbReference type="InterPro" id="IPR041698">
    <property type="entry name" value="Methyltransf_25"/>
</dbReference>
<dbReference type="InterPro" id="IPR029063">
    <property type="entry name" value="SAM-dependent_MTases_sf"/>
</dbReference>
<dbReference type="InterPro" id="IPR023506">
    <property type="entry name" value="Trans-aconitate_MeTrfase"/>
</dbReference>
<dbReference type="InterPro" id="IPR023149">
    <property type="entry name" value="Trans_acon_MeTrfase_C"/>
</dbReference>
<dbReference type="NCBIfam" id="NF002463">
    <property type="entry name" value="PRK01683.1"/>
    <property type="match status" value="1"/>
</dbReference>
<dbReference type="PANTHER" id="PTHR43861:SF1">
    <property type="entry name" value="TRANS-ACONITATE 2-METHYLTRANSFERASE"/>
    <property type="match status" value="1"/>
</dbReference>
<dbReference type="PANTHER" id="PTHR43861">
    <property type="entry name" value="TRANS-ACONITATE 2-METHYLTRANSFERASE-RELATED"/>
    <property type="match status" value="1"/>
</dbReference>
<dbReference type="Pfam" id="PF13649">
    <property type="entry name" value="Methyltransf_25"/>
    <property type="match status" value="1"/>
</dbReference>
<dbReference type="SUPFAM" id="SSF53335">
    <property type="entry name" value="S-adenosyl-L-methionine-dependent methyltransferases"/>
    <property type="match status" value="1"/>
</dbReference>
<evidence type="ECO:0000255" key="1">
    <source>
        <dbReference type="HAMAP-Rule" id="MF_00560"/>
    </source>
</evidence>
<gene>
    <name evidence="1" type="primary">tam</name>
    <name type="ordered locus">UTI89_C1738</name>
</gene>
<protein>
    <recommendedName>
        <fullName evidence="1">Trans-aconitate 2-methyltransferase</fullName>
        <ecNumber evidence="1">2.1.1.144</ecNumber>
    </recommendedName>
</protein>
<name>TAM_ECOUT</name>
<feature type="chain" id="PRO_1000056559" description="Trans-aconitate 2-methyltransferase">
    <location>
        <begin position="1"/>
        <end position="252"/>
    </location>
</feature>
<proteinExistence type="inferred from homology"/>
<accession>Q1RBP8</accession>
<keyword id="KW-0963">Cytoplasm</keyword>
<keyword id="KW-0489">Methyltransferase</keyword>
<keyword id="KW-0949">S-adenosyl-L-methionine</keyword>
<keyword id="KW-0808">Transferase</keyword>
<reference key="1">
    <citation type="journal article" date="2006" name="Proc. Natl. Acad. Sci. U.S.A.">
        <title>Identification of genes subject to positive selection in uropathogenic strains of Escherichia coli: a comparative genomics approach.</title>
        <authorList>
            <person name="Chen S.L."/>
            <person name="Hung C.-S."/>
            <person name="Xu J."/>
            <person name="Reigstad C.S."/>
            <person name="Magrini V."/>
            <person name="Sabo A."/>
            <person name="Blasiar D."/>
            <person name="Bieri T."/>
            <person name="Meyer R.R."/>
            <person name="Ozersky P."/>
            <person name="Armstrong J.R."/>
            <person name="Fulton R.S."/>
            <person name="Latreille J.P."/>
            <person name="Spieth J."/>
            <person name="Hooton T.M."/>
            <person name="Mardis E.R."/>
            <person name="Hultgren S.J."/>
            <person name="Gordon J.I."/>
        </authorList>
    </citation>
    <scope>NUCLEOTIDE SEQUENCE [LARGE SCALE GENOMIC DNA]</scope>
    <source>
        <strain>UTI89 / UPEC</strain>
    </source>
</reference>